<reference key="1">
    <citation type="journal article" date="2007" name="Nat. Biotechnol.">
        <title>Complete genome sequence of the fish pathogen Flavobacterium psychrophilum.</title>
        <authorList>
            <person name="Duchaud E."/>
            <person name="Boussaha M."/>
            <person name="Loux V."/>
            <person name="Bernardet J.-F."/>
            <person name="Michel C."/>
            <person name="Kerouault B."/>
            <person name="Mondot S."/>
            <person name="Nicolas P."/>
            <person name="Bossy R."/>
            <person name="Caron C."/>
            <person name="Bessieres P."/>
            <person name="Gibrat J.-F."/>
            <person name="Claverol S."/>
            <person name="Dumetz F."/>
            <person name="Le Henaff M."/>
            <person name="Benmansour A."/>
        </authorList>
    </citation>
    <scope>NUCLEOTIDE SEQUENCE [LARGE SCALE GENOMIC DNA]</scope>
    <source>
        <strain>ATCC 49511 / DSM 21280 / CIP 103535 / JIP02/86</strain>
    </source>
</reference>
<sequence length="274" mass="29709">MSVRKLKPITPGQRFRVVNGFDAITTDKPERSLIAPIKNSGGRNSQGKMTMRYTGGGHKQRYRIIDFKRTKDGIPASVKSIEYDPNRTAFIALLAYADGEKTYIIAQNGLQVGQKVVSGEGSAPEIGNTLPLSKIPLGTVISCIELRPGQGAVIARSAGTFAQLMARDGKYATIKMPSGETRLILLTCSATIGAVSNSDHQLIVSGKAGRTRWLGRRPRTRPVAMNPVDHPMGGGEGRSSGGHPRSRNGIPAKGYRTRSKKNPSNKYIVERRKK</sequence>
<accession>A6GZ96</accession>
<proteinExistence type="inferred from homology"/>
<keyword id="KW-1185">Reference proteome</keyword>
<keyword id="KW-0687">Ribonucleoprotein</keyword>
<keyword id="KW-0689">Ribosomal protein</keyword>
<keyword id="KW-0694">RNA-binding</keyword>
<keyword id="KW-0699">rRNA-binding</keyword>
<organism>
    <name type="scientific">Flavobacterium psychrophilum (strain ATCC 49511 / DSM 21280 / CIP 103535 / JIP02/86)</name>
    <dbReference type="NCBI Taxonomy" id="402612"/>
    <lineage>
        <taxon>Bacteria</taxon>
        <taxon>Pseudomonadati</taxon>
        <taxon>Bacteroidota</taxon>
        <taxon>Flavobacteriia</taxon>
        <taxon>Flavobacteriales</taxon>
        <taxon>Flavobacteriaceae</taxon>
        <taxon>Flavobacterium</taxon>
    </lineage>
</organism>
<gene>
    <name evidence="1" type="primary">rplB</name>
    <name type="ordered locus">FP1336</name>
</gene>
<protein>
    <recommendedName>
        <fullName evidence="1">Large ribosomal subunit protein uL2</fullName>
    </recommendedName>
    <alternativeName>
        <fullName evidence="3">50S ribosomal protein L2</fullName>
    </alternativeName>
</protein>
<feature type="chain" id="PRO_0000309916" description="Large ribosomal subunit protein uL2">
    <location>
        <begin position="1"/>
        <end position="274"/>
    </location>
</feature>
<feature type="region of interest" description="Disordered" evidence="2">
    <location>
        <begin position="34"/>
        <end position="53"/>
    </location>
</feature>
<feature type="region of interest" description="Disordered" evidence="2">
    <location>
        <begin position="216"/>
        <end position="274"/>
    </location>
</feature>
<dbReference type="EMBL" id="AM398681">
    <property type="protein sequence ID" value="CAL43419.1"/>
    <property type="molecule type" value="Genomic_DNA"/>
</dbReference>
<dbReference type="RefSeq" id="WP_011963466.1">
    <property type="nucleotide sequence ID" value="NC_009613.3"/>
</dbReference>
<dbReference type="RefSeq" id="YP_001296230.1">
    <property type="nucleotide sequence ID" value="NC_009613.3"/>
</dbReference>
<dbReference type="SMR" id="A6GZ96"/>
<dbReference type="STRING" id="402612.FP1336"/>
<dbReference type="EnsemblBacteria" id="CAL43419">
    <property type="protein sequence ID" value="CAL43419"/>
    <property type="gene ID" value="FP1336"/>
</dbReference>
<dbReference type="GeneID" id="66553239"/>
<dbReference type="KEGG" id="fps:FP1336"/>
<dbReference type="PATRIC" id="fig|402612.5.peg.1353"/>
<dbReference type="eggNOG" id="COG0090">
    <property type="taxonomic scope" value="Bacteria"/>
</dbReference>
<dbReference type="HOGENOM" id="CLU_036235_2_1_10"/>
<dbReference type="OrthoDB" id="9778722at2"/>
<dbReference type="Proteomes" id="UP000006394">
    <property type="component" value="Chromosome"/>
</dbReference>
<dbReference type="GO" id="GO:0015934">
    <property type="term" value="C:large ribosomal subunit"/>
    <property type="evidence" value="ECO:0007669"/>
    <property type="project" value="InterPro"/>
</dbReference>
<dbReference type="GO" id="GO:0019843">
    <property type="term" value="F:rRNA binding"/>
    <property type="evidence" value="ECO:0007669"/>
    <property type="project" value="UniProtKB-UniRule"/>
</dbReference>
<dbReference type="GO" id="GO:0003735">
    <property type="term" value="F:structural constituent of ribosome"/>
    <property type="evidence" value="ECO:0007669"/>
    <property type="project" value="InterPro"/>
</dbReference>
<dbReference type="GO" id="GO:0016740">
    <property type="term" value="F:transferase activity"/>
    <property type="evidence" value="ECO:0007669"/>
    <property type="project" value="InterPro"/>
</dbReference>
<dbReference type="GO" id="GO:0002181">
    <property type="term" value="P:cytoplasmic translation"/>
    <property type="evidence" value="ECO:0007669"/>
    <property type="project" value="TreeGrafter"/>
</dbReference>
<dbReference type="FunFam" id="2.30.30.30:FF:000001">
    <property type="entry name" value="50S ribosomal protein L2"/>
    <property type="match status" value="1"/>
</dbReference>
<dbReference type="FunFam" id="2.40.50.140:FF:000003">
    <property type="entry name" value="50S ribosomal protein L2"/>
    <property type="match status" value="1"/>
</dbReference>
<dbReference type="FunFam" id="4.10.950.10:FF:000001">
    <property type="entry name" value="50S ribosomal protein L2"/>
    <property type="match status" value="1"/>
</dbReference>
<dbReference type="Gene3D" id="2.30.30.30">
    <property type="match status" value="1"/>
</dbReference>
<dbReference type="Gene3D" id="2.40.50.140">
    <property type="entry name" value="Nucleic acid-binding proteins"/>
    <property type="match status" value="1"/>
</dbReference>
<dbReference type="Gene3D" id="4.10.950.10">
    <property type="entry name" value="Ribosomal protein L2, domain 3"/>
    <property type="match status" value="1"/>
</dbReference>
<dbReference type="HAMAP" id="MF_01320_B">
    <property type="entry name" value="Ribosomal_uL2_B"/>
    <property type="match status" value="1"/>
</dbReference>
<dbReference type="InterPro" id="IPR012340">
    <property type="entry name" value="NA-bd_OB-fold"/>
</dbReference>
<dbReference type="InterPro" id="IPR014722">
    <property type="entry name" value="Rib_uL2_dom2"/>
</dbReference>
<dbReference type="InterPro" id="IPR002171">
    <property type="entry name" value="Ribosomal_uL2"/>
</dbReference>
<dbReference type="InterPro" id="IPR005880">
    <property type="entry name" value="Ribosomal_uL2_bac/org-type"/>
</dbReference>
<dbReference type="InterPro" id="IPR022669">
    <property type="entry name" value="Ribosomal_uL2_C"/>
</dbReference>
<dbReference type="InterPro" id="IPR014726">
    <property type="entry name" value="Ribosomal_uL2_dom3"/>
</dbReference>
<dbReference type="InterPro" id="IPR022666">
    <property type="entry name" value="Ribosomal_uL2_RNA-bd_dom"/>
</dbReference>
<dbReference type="InterPro" id="IPR008991">
    <property type="entry name" value="Translation_prot_SH3-like_sf"/>
</dbReference>
<dbReference type="NCBIfam" id="TIGR01171">
    <property type="entry name" value="rplB_bact"/>
    <property type="match status" value="1"/>
</dbReference>
<dbReference type="PANTHER" id="PTHR13691:SF5">
    <property type="entry name" value="LARGE RIBOSOMAL SUBUNIT PROTEIN UL2M"/>
    <property type="match status" value="1"/>
</dbReference>
<dbReference type="PANTHER" id="PTHR13691">
    <property type="entry name" value="RIBOSOMAL PROTEIN L2"/>
    <property type="match status" value="1"/>
</dbReference>
<dbReference type="Pfam" id="PF00181">
    <property type="entry name" value="Ribosomal_L2"/>
    <property type="match status" value="1"/>
</dbReference>
<dbReference type="Pfam" id="PF03947">
    <property type="entry name" value="Ribosomal_L2_C"/>
    <property type="match status" value="1"/>
</dbReference>
<dbReference type="PIRSF" id="PIRSF002158">
    <property type="entry name" value="Ribosomal_L2"/>
    <property type="match status" value="1"/>
</dbReference>
<dbReference type="SMART" id="SM01383">
    <property type="entry name" value="Ribosomal_L2"/>
    <property type="match status" value="1"/>
</dbReference>
<dbReference type="SMART" id="SM01382">
    <property type="entry name" value="Ribosomal_L2_C"/>
    <property type="match status" value="1"/>
</dbReference>
<dbReference type="SUPFAM" id="SSF50249">
    <property type="entry name" value="Nucleic acid-binding proteins"/>
    <property type="match status" value="1"/>
</dbReference>
<dbReference type="SUPFAM" id="SSF50104">
    <property type="entry name" value="Translation proteins SH3-like domain"/>
    <property type="match status" value="1"/>
</dbReference>
<evidence type="ECO:0000255" key="1">
    <source>
        <dbReference type="HAMAP-Rule" id="MF_01320"/>
    </source>
</evidence>
<evidence type="ECO:0000256" key="2">
    <source>
        <dbReference type="SAM" id="MobiDB-lite"/>
    </source>
</evidence>
<evidence type="ECO:0000305" key="3"/>
<comment type="function">
    <text evidence="1">One of the primary rRNA binding proteins. Required for association of the 30S and 50S subunits to form the 70S ribosome, for tRNA binding and peptide bond formation. It has been suggested to have peptidyltransferase activity; this is somewhat controversial. Makes several contacts with the 16S rRNA in the 70S ribosome.</text>
</comment>
<comment type="subunit">
    <text evidence="1">Part of the 50S ribosomal subunit. Forms a bridge to the 30S subunit in the 70S ribosome.</text>
</comment>
<comment type="similarity">
    <text evidence="1">Belongs to the universal ribosomal protein uL2 family.</text>
</comment>
<name>RL2_FLAPJ</name>